<reference key="1">
    <citation type="journal article" date="2000" name="Nature">
        <title>Ancestral chloroplast genome in Mesostigma viride reveals an early branch of green plant evolution.</title>
        <authorList>
            <person name="Lemieux C."/>
            <person name="Otis C."/>
            <person name="Turmel M."/>
        </authorList>
    </citation>
    <scope>NUCLEOTIDE SEQUENCE [LARGE SCALE GENOMIC DNA]</scope>
    <source>
        <strain>NIES-296 / KY-14 / CCMP 2046</strain>
    </source>
</reference>
<feature type="initiator methionine" description="Removed" evidence="1">
    <location>
        <position position="1"/>
    </location>
</feature>
<feature type="chain" id="PRO_0000090510" description="Photosystem II D2 protein">
    <location>
        <begin position="2"/>
        <end position="354"/>
    </location>
</feature>
<feature type="transmembrane region" description="Helical" evidence="2">
    <location>
        <begin position="42"/>
        <end position="62"/>
    </location>
</feature>
<feature type="transmembrane region" description="Helical" evidence="2">
    <location>
        <begin position="126"/>
        <end position="142"/>
    </location>
</feature>
<feature type="transmembrane region" description="Helical" evidence="2">
    <location>
        <begin position="154"/>
        <end position="167"/>
    </location>
</feature>
<feature type="transmembrane region" description="Helical" evidence="2">
    <location>
        <begin position="209"/>
        <end position="229"/>
    </location>
</feature>
<feature type="transmembrane region" description="Helical" evidence="2">
    <location>
        <begin position="280"/>
        <end position="296"/>
    </location>
</feature>
<feature type="binding site" description="axial binding residue" evidence="2">
    <location>
        <position position="119"/>
    </location>
    <ligand>
        <name>chlorophyll a</name>
        <dbReference type="ChEBI" id="CHEBI:58416"/>
        <label>ChlzD2</label>
    </ligand>
    <ligandPart>
        <name>Mg</name>
        <dbReference type="ChEBI" id="CHEBI:25107"/>
    </ligandPart>
</feature>
<feature type="binding site" evidence="2">
    <location>
        <position position="131"/>
    </location>
    <ligand>
        <name>pheophytin a</name>
        <dbReference type="ChEBI" id="CHEBI:136840"/>
        <label>D2</label>
    </ligand>
</feature>
<feature type="binding site" evidence="2">
    <location>
        <position position="144"/>
    </location>
    <ligand>
        <name>pheophytin a</name>
        <dbReference type="ChEBI" id="CHEBI:136840"/>
        <label>D2</label>
    </ligand>
</feature>
<feature type="binding site" description="axial binding residue" evidence="2">
    <location>
        <position position="199"/>
    </location>
    <ligand>
        <name>chlorophyll a</name>
        <dbReference type="ChEBI" id="CHEBI:58416"/>
        <label>PD2</label>
    </ligand>
    <ligandPart>
        <name>Mg</name>
        <dbReference type="ChEBI" id="CHEBI:25107"/>
    </ligandPart>
</feature>
<feature type="binding site" evidence="2">
    <location>
        <position position="216"/>
    </location>
    <ligand>
        <name>a plastoquinone</name>
        <dbReference type="ChEBI" id="CHEBI:17757"/>
        <label>Q(A)</label>
    </ligand>
</feature>
<feature type="binding site" evidence="2">
    <location>
        <position position="216"/>
    </location>
    <ligand>
        <name>Fe cation</name>
        <dbReference type="ChEBI" id="CHEBI:24875"/>
        <note>ligand shared with heterodimeric partner</note>
    </ligand>
</feature>
<feature type="binding site" evidence="2">
    <location>
        <position position="263"/>
    </location>
    <ligand>
        <name>a plastoquinone</name>
        <dbReference type="ChEBI" id="CHEBI:17757"/>
        <label>Q(A)</label>
    </ligand>
</feature>
<feature type="binding site" evidence="2">
    <location>
        <position position="270"/>
    </location>
    <ligand>
        <name>Fe cation</name>
        <dbReference type="ChEBI" id="CHEBI:24875"/>
        <note>ligand shared with heterodimeric partner</note>
    </ligand>
</feature>
<feature type="modified residue" description="N-acetylthreonine" evidence="1">
    <location>
        <position position="2"/>
    </location>
</feature>
<feature type="modified residue" description="Phosphothreonine" evidence="1">
    <location>
        <position position="2"/>
    </location>
</feature>
<sequence>MTISIDKSVKKAEPSIFDLCDDWLKRDRFVFIGWSGLLLLPCAYFALGGFFTGNTFVTSWYTHGLASSYLEGCNVLTAAVSTPSNAMGHSLLLLWGPEAQGDFTRWCQLGGLWTFTALHGAFGLIGFMLRQFEIARAVKIRPYNAIAFSGPIAVFVSVFLIYPLGQQSWFFAPSFGVAAIFRFILFFQGFHNWTLNPFHMMGVAGVLGAALLCAIHGATVENTLFEDGDAANTFRAFNPTQSEETYSMVTANRFWSQIFGVAFANKRWLHFFMLFVPVTGLWMSAIGVVGLALNLRAYDFVSQEIRAAEDPEFETFYTKNLLLNEGIRAWMAAQDQPHENLVFPEEVLPRGNAL</sequence>
<gene>
    <name evidence="2" type="primary">psbD</name>
</gene>
<dbReference type="EC" id="1.10.3.9" evidence="2"/>
<dbReference type="EMBL" id="AF166114">
    <property type="protein sequence ID" value="AAF43789.1"/>
    <property type="molecule type" value="Genomic_DNA"/>
</dbReference>
<dbReference type="RefSeq" id="NP_038348.1">
    <property type="nucleotide sequence ID" value="NC_002186.1"/>
</dbReference>
<dbReference type="SMR" id="Q9MUW2"/>
<dbReference type="GeneID" id="800954"/>
<dbReference type="GO" id="GO:0009535">
    <property type="term" value="C:chloroplast thylakoid membrane"/>
    <property type="evidence" value="ECO:0007669"/>
    <property type="project" value="UniProtKB-SubCell"/>
</dbReference>
<dbReference type="GO" id="GO:0009523">
    <property type="term" value="C:photosystem II"/>
    <property type="evidence" value="ECO:0007669"/>
    <property type="project" value="UniProtKB-KW"/>
</dbReference>
<dbReference type="GO" id="GO:0016168">
    <property type="term" value="F:chlorophyll binding"/>
    <property type="evidence" value="ECO:0007669"/>
    <property type="project" value="UniProtKB-UniRule"/>
</dbReference>
<dbReference type="GO" id="GO:0045156">
    <property type="term" value="F:electron transporter, transferring electrons within the cyclic electron transport pathway of photosynthesis activity"/>
    <property type="evidence" value="ECO:0007669"/>
    <property type="project" value="InterPro"/>
</dbReference>
<dbReference type="GO" id="GO:0005506">
    <property type="term" value="F:iron ion binding"/>
    <property type="evidence" value="ECO:0007669"/>
    <property type="project" value="UniProtKB-UniRule"/>
</dbReference>
<dbReference type="GO" id="GO:0010242">
    <property type="term" value="F:oxygen evolving activity"/>
    <property type="evidence" value="ECO:0007669"/>
    <property type="project" value="UniProtKB-EC"/>
</dbReference>
<dbReference type="GO" id="GO:0009772">
    <property type="term" value="P:photosynthetic electron transport in photosystem II"/>
    <property type="evidence" value="ECO:0007669"/>
    <property type="project" value="InterPro"/>
</dbReference>
<dbReference type="CDD" id="cd09288">
    <property type="entry name" value="Photosystem-II_D2"/>
    <property type="match status" value="1"/>
</dbReference>
<dbReference type="FunFam" id="1.20.85.10:FF:000001">
    <property type="entry name" value="photosystem II D2 protein-like"/>
    <property type="match status" value="1"/>
</dbReference>
<dbReference type="Gene3D" id="1.20.85.10">
    <property type="entry name" value="Photosystem II protein D1-like"/>
    <property type="match status" value="1"/>
</dbReference>
<dbReference type="HAMAP" id="MF_01383">
    <property type="entry name" value="PSII_PsbD_D2"/>
    <property type="match status" value="1"/>
</dbReference>
<dbReference type="InterPro" id="IPR055266">
    <property type="entry name" value="D1/D2"/>
</dbReference>
<dbReference type="InterPro" id="IPR036854">
    <property type="entry name" value="Photo_II_D1/D2_sf"/>
</dbReference>
<dbReference type="InterPro" id="IPR000484">
    <property type="entry name" value="Photo_RC_L/M"/>
</dbReference>
<dbReference type="InterPro" id="IPR055265">
    <property type="entry name" value="Photo_RC_L/M_CS"/>
</dbReference>
<dbReference type="InterPro" id="IPR005868">
    <property type="entry name" value="PSII_PsbD/D2"/>
</dbReference>
<dbReference type="NCBIfam" id="TIGR01152">
    <property type="entry name" value="psbD"/>
    <property type="match status" value="1"/>
</dbReference>
<dbReference type="PANTHER" id="PTHR33149:SF12">
    <property type="entry name" value="PHOTOSYSTEM II D2 PROTEIN"/>
    <property type="match status" value="1"/>
</dbReference>
<dbReference type="PANTHER" id="PTHR33149">
    <property type="entry name" value="PHOTOSYSTEM II PROTEIN D1"/>
    <property type="match status" value="1"/>
</dbReference>
<dbReference type="Pfam" id="PF00124">
    <property type="entry name" value="Photo_RC"/>
    <property type="match status" value="1"/>
</dbReference>
<dbReference type="PRINTS" id="PR00256">
    <property type="entry name" value="REACTNCENTRE"/>
</dbReference>
<dbReference type="SUPFAM" id="SSF81483">
    <property type="entry name" value="Bacterial photosystem II reaction centre, L and M subunits"/>
    <property type="match status" value="1"/>
</dbReference>
<dbReference type="PROSITE" id="PS00244">
    <property type="entry name" value="REACTION_CENTER"/>
    <property type="match status" value="1"/>
</dbReference>
<protein>
    <recommendedName>
        <fullName evidence="2">Photosystem II D2 protein</fullName>
        <shortName evidence="2">PSII D2 protein</shortName>
        <ecNumber evidence="2">1.10.3.9</ecNumber>
    </recommendedName>
    <alternativeName>
        <fullName evidence="2">Photosystem Q(A) protein</fullName>
    </alternativeName>
</protein>
<accession>Q9MUW2</accession>
<evidence type="ECO:0000250" key="1">
    <source>
        <dbReference type="UniProtKB" id="P56761"/>
    </source>
</evidence>
<evidence type="ECO:0000255" key="2">
    <source>
        <dbReference type="HAMAP-Rule" id="MF_01383"/>
    </source>
</evidence>
<comment type="function">
    <text evidence="2">Photosystem II (PSII) is a light-driven water:plastoquinone oxidoreductase that uses light energy to abstract electrons from H(2)O, generating O(2) and a proton gradient subsequently used for ATP formation. It consists of a core antenna complex that captures photons, and an electron transfer chain that converts photonic excitation into a charge separation. The D1/D2 (PsbA/PsbD) reaction center heterodimer binds P680, the primary electron donor of PSII as well as several subsequent electron acceptors. D2 is needed for assembly of a stable PSII complex.</text>
</comment>
<comment type="catalytic activity">
    <reaction evidence="2">
        <text>2 a plastoquinone + 4 hnu + 2 H2O = 2 a plastoquinol + O2</text>
        <dbReference type="Rhea" id="RHEA:36359"/>
        <dbReference type="Rhea" id="RHEA-COMP:9561"/>
        <dbReference type="Rhea" id="RHEA-COMP:9562"/>
        <dbReference type="ChEBI" id="CHEBI:15377"/>
        <dbReference type="ChEBI" id="CHEBI:15379"/>
        <dbReference type="ChEBI" id="CHEBI:17757"/>
        <dbReference type="ChEBI" id="CHEBI:30212"/>
        <dbReference type="ChEBI" id="CHEBI:62192"/>
        <dbReference type="EC" id="1.10.3.9"/>
    </reaction>
</comment>
<comment type="cofactor">
    <text evidence="2">The D1/D2 heterodimer binds P680, chlorophylls that are the primary electron donor of PSII, and subsequent electron acceptors. It shares a non-heme iron and each subunit binds pheophytin, quinone, additional chlorophylls, carotenoids and lipids. There is also a Cl(-1) ion associated with D1 and D2, which is required for oxygen evolution. The PSII complex binds additional chlorophylls, carotenoids and specific lipids.</text>
</comment>
<comment type="subunit">
    <text evidence="2">PSII is composed of 1 copy each of membrane proteins PsbA, PsbB, PsbC, PsbD, PsbE, PsbF, PsbH, PsbI, PsbJ, PsbK, PsbL, PsbM, PsbT, PsbX, PsbY, PsbZ, Psb30/Ycf12, at least 3 peripheral proteins of the oxygen-evolving complex and a large number of cofactors. It forms dimeric complexes.</text>
</comment>
<comment type="subcellular location">
    <subcellularLocation>
        <location evidence="2">Plastid</location>
        <location evidence="2">Chloroplast thylakoid membrane</location>
        <topology evidence="2">Multi-pass membrane protein</topology>
    </subcellularLocation>
</comment>
<comment type="miscellaneous">
    <text evidence="2">2 of the reaction center chlorophylls (ChlD1 and ChlD2) are entirely coordinated by water.</text>
</comment>
<comment type="similarity">
    <text evidence="2">Belongs to the reaction center PufL/M/PsbA/D family.</text>
</comment>
<organism>
    <name type="scientific">Mesostigma viride</name>
    <name type="common">Green alga</name>
    <dbReference type="NCBI Taxonomy" id="41882"/>
    <lineage>
        <taxon>Eukaryota</taxon>
        <taxon>Viridiplantae</taxon>
        <taxon>Streptophyta</taxon>
        <taxon>Mesostigmatophyceae</taxon>
        <taxon>Mesostigmatales</taxon>
        <taxon>Mesostigmataceae</taxon>
        <taxon>Mesostigma</taxon>
    </lineage>
</organism>
<keyword id="KW-0007">Acetylation</keyword>
<keyword id="KW-0148">Chlorophyll</keyword>
<keyword id="KW-0150">Chloroplast</keyword>
<keyword id="KW-0157">Chromophore</keyword>
<keyword id="KW-0249">Electron transport</keyword>
<keyword id="KW-0408">Iron</keyword>
<keyword id="KW-0460">Magnesium</keyword>
<keyword id="KW-0472">Membrane</keyword>
<keyword id="KW-0479">Metal-binding</keyword>
<keyword id="KW-0560">Oxidoreductase</keyword>
<keyword id="KW-0597">Phosphoprotein</keyword>
<keyword id="KW-0602">Photosynthesis</keyword>
<keyword id="KW-0604">Photosystem II</keyword>
<keyword id="KW-0934">Plastid</keyword>
<keyword id="KW-0793">Thylakoid</keyword>
<keyword id="KW-0812">Transmembrane</keyword>
<keyword id="KW-1133">Transmembrane helix</keyword>
<keyword id="KW-0813">Transport</keyword>
<name>PSBD_MESVI</name>
<geneLocation type="chloroplast"/>
<proteinExistence type="inferred from homology"/>